<name>GLGA_VIBVY</name>
<feature type="chain" id="PRO_0000188663" description="Glycogen synthase">
    <location>
        <begin position="1"/>
        <end position="485"/>
    </location>
</feature>
<feature type="binding site" evidence="1">
    <location>
        <position position="20"/>
    </location>
    <ligand>
        <name>ADP-alpha-D-glucose</name>
        <dbReference type="ChEBI" id="CHEBI:57498"/>
    </ligand>
</feature>
<proteinExistence type="inferred from homology"/>
<organism>
    <name type="scientific">Vibrio vulnificus (strain YJ016)</name>
    <dbReference type="NCBI Taxonomy" id="196600"/>
    <lineage>
        <taxon>Bacteria</taxon>
        <taxon>Pseudomonadati</taxon>
        <taxon>Pseudomonadota</taxon>
        <taxon>Gammaproteobacteria</taxon>
        <taxon>Vibrionales</taxon>
        <taxon>Vibrionaceae</taxon>
        <taxon>Vibrio</taxon>
    </lineage>
</organism>
<evidence type="ECO:0000255" key="1">
    <source>
        <dbReference type="HAMAP-Rule" id="MF_00484"/>
    </source>
</evidence>
<evidence type="ECO:0000305" key="2"/>
<keyword id="KW-0320">Glycogen biosynthesis</keyword>
<keyword id="KW-0328">Glycosyltransferase</keyword>
<keyword id="KW-0808">Transferase</keyword>
<dbReference type="EC" id="2.4.1.21" evidence="1"/>
<dbReference type="EMBL" id="BA000037">
    <property type="protein sequence ID" value="BAC95076.1"/>
    <property type="status" value="ALT_INIT"/>
    <property type="molecule type" value="Genomic_DNA"/>
</dbReference>
<dbReference type="RefSeq" id="WP_101957211.1">
    <property type="nucleotide sequence ID" value="NC_005139.1"/>
</dbReference>
<dbReference type="SMR" id="Q7MJ50"/>
<dbReference type="STRING" id="672.VV93_v1c20220"/>
<dbReference type="CAZy" id="GT5">
    <property type="family name" value="Glycosyltransferase Family 5"/>
</dbReference>
<dbReference type="KEGG" id="vvy:VV2312"/>
<dbReference type="eggNOG" id="COG0297">
    <property type="taxonomic scope" value="Bacteria"/>
</dbReference>
<dbReference type="HOGENOM" id="CLU_009583_18_2_6"/>
<dbReference type="UniPathway" id="UPA00164"/>
<dbReference type="Proteomes" id="UP000002675">
    <property type="component" value="Chromosome I"/>
</dbReference>
<dbReference type="GO" id="GO:0005829">
    <property type="term" value="C:cytosol"/>
    <property type="evidence" value="ECO:0007669"/>
    <property type="project" value="TreeGrafter"/>
</dbReference>
<dbReference type="GO" id="GO:0009011">
    <property type="term" value="F:alpha-1,4-glucan glucosyltransferase (ADP-glucose donor) activity"/>
    <property type="evidence" value="ECO:0007669"/>
    <property type="project" value="UniProtKB-UniRule"/>
</dbReference>
<dbReference type="GO" id="GO:0004373">
    <property type="term" value="F:alpha-1,4-glucan glucosyltransferase (UDP-glucose donor) activity"/>
    <property type="evidence" value="ECO:0007669"/>
    <property type="project" value="InterPro"/>
</dbReference>
<dbReference type="GO" id="GO:0005978">
    <property type="term" value="P:glycogen biosynthetic process"/>
    <property type="evidence" value="ECO:0007669"/>
    <property type="project" value="UniProtKB-UniRule"/>
</dbReference>
<dbReference type="CDD" id="cd03791">
    <property type="entry name" value="GT5_Glycogen_synthase_DULL1-like"/>
    <property type="match status" value="1"/>
</dbReference>
<dbReference type="Gene3D" id="3.40.50.2000">
    <property type="entry name" value="Glycogen Phosphorylase B"/>
    <property type="match status" value="2"/>
</dbReference>
<dbReference type="HAMAP" id="MF_00484">
    <property type="entry name" value="Glycogen_synth"/>
    <property type="match status" value="1"/>
</dbReference>
<dbReference type="InterPro" id="IPR001296">
    <property type="entry name" value="Glyco_trans_1"/>
</dbReference>
<dbReference type="InterPro" id="IPR011835">
    <property type="entry name" value="GS/SS"/>
</dbReference>
<dbReference type="InterPro" id="IPR013534">
    <property type="entry name" value="Starch_synth_cat_dom"/>
</dbReference>
<dbReference type="NCBIfam" id="TIGR02095">
    <property type="entry name" value="glgA"/>
    <property type="match status" value="1"/>
</dbReference>
<dbReference type="NCBIfam" id="NF001903">
    <property type="entry name" value="PRK00654.2-2"/>
    <property type="match status" value="1"/>
</dbReference>
<dbReference type="NCBIfam" id="NF001906">
    <property type="entry name" value="PRK00654.2-5"/>
    <property type="match status" value="1"/>
</dbReference>
<dbReference type="PANTHER" id="PTHR45825:SF11">
    <property type="entry name" value="ALPHA AMYLASE DOMAIN-CONTAINING PROTEIN"/>
    <property type="match status" value="1"/>
</dbReference>
<dbReference type="PANTHER" id="PTHR45825">
    <property type="entry name" value="GRANULE-BOUND STARCH SYNTHASE 1, CHLOROPLASTIC/AMYLOPLASTIC"/>
    <property type="match status" value="1"/>
</dbReference>
<dbReference type="Pfam" id="PF08323">
    <property type="entry name" value="Glyco_transf_5"/>
    <property type="match status" value="1"/>
</dbReference>
<dbReference type="Pfam" id="PF00534">
    <property type="entry name" value="Glycos_transf_1"/>
    <property type="match status" value="1"/>
</dbReference>
<dbReference type="SUPFAM" id="SSF53756">
    <property type="entry name" value="UDP-Glycosyltransferase/glycogen phosphorylase"/>
    <property type="match status" value="1"/>
</dbReference>
<reference key="1">
    <citation type="journal article" date="2003" name="Genome Res.">
        <title>Comparative genome analysis of Vibrio vulnificus, a marine pathogen.</title>
        <authorList>
            <person name="Chen C.-Y."/>
            <person name="Wu K.-M."/>
            <person name="Chang Y.-C."/>
            <person name="Chang C.-H."/>
            <person name="Tsai H.-C."/>
            <person name="Liao T.-L."/>
            <person name="Liu Y.-M."/>
            <person name="Chen H.-J."/>
            <person name="Shen A.B.-T."/>
            <person name="Li J.-C."/>
            <person name="Su T.-L."/>
            <person name="Shao C.-P."/>
            <person name="Lee C.-T."/>
            <person name="Hor L.-I."/>
            <person name="Tsai S.-F."/>
        </authorList>
    </citation>
    <scope>NUCLEOTIDE SEQUENCE [LARGE SCALE GENOMIC DNA]</scope>
    <source>
        <strain>YJ016</strain>
    </source>
</reference>
<sequence length="485" mass="54229">MATNPLSILFVASEVEGLIKSGGLADVAKALPEALVNLQHDARIAIPAYTAIPNVCDDEVILDTHLETWPHTHYQVKKRFLGDNPVYLIACGHYFDRPSMYAENNQAYTDNGERFAFFSAACLDMLPKIGFQPDIVHANDWHTGLVPFLLKHRYGQDPFFAQTKSILSIHNAVFKGVFHYDEMQCLPEFHCRNVPDAAVSSTHMTMLKAGVMNADKINAVSPTYAEELKTELGSHGMAWEFQQRAGDLVGILNGCDYSAWHPDTDSYLPINYKATKQSMVRGKNGCKRALQEQVGLPVKDVAMFGMVCRLTHQKGVHYLLPVLTEFLKLDVQLVLVGTGDPLLAAQLRDVAAQFGEKFVFVEAYNNQLAHLVEAASDFFLMPSEFEPCGLNQIYSMAYGSLPIVRGVGGLKDSVCDYDVNPETATGFVFYEPTAQALLITMQRALLLYAQNLTELRRVQLYAMERDFCWNKAAEQYVELYRSALK</sequence>
<comment type="function">
    <text evidence="1">Synthesizes alpha-1,4-glucan chains using ADP-glucose.</text>
</comment>
<comment type="catalytic activity">
    <reaction evidence="1">
        <text>[(1-&gt;4)-alpha-D-glucosyl](n) + ADP-alpha-D-glucose = [(1-&gt;4)-alpha-D-glucosyl](n+1) + ADP + H(+)</text>
        <dbReference type="Rhea" id="RHEA:18189"/>
        <dbReference type="Rhea" id="RHEA-COMP:9584"/>
        <dbReference type="Rhea" id="RHEA-COMP:9587"/>
        <dbReference type="ChEBI" id="CHEBI:15378"/>
        <dbReference type="ChEBI" id="CHEBI:15444"/>
        <dbReference type="ChEBI" id="CHEBI:57498"/>
        <dbReference type="ChEBI" id="CHEBI:456216"/>
        <dbReference type="EC" id="2.4.1.21"/>
    </reaction>
</comment>
<comment type="pathway">
    <text evidence="1">Glycan biosynthesis; glycogen biosynthesis.</text>
</comment>
<comment type="similarity">
    <text evidence="1">Belongs to the glycosyltransferase 1 family. Bacterial/plant glycogen synthase subfamily.</text>
</comment>
<comment type="sequence caution" evidence="2">
    <conflict type="erroneous initiation">
        <sequence resource="EMBL-CDS" id="BAC95076"/>
    </conflict>
</comment>
<protein>
    <recommendedName>
        <fullName evidence="1">Glycogen synthase</fullName>
        <ecNumber evidence="1">2.4.1.21</ecNumber>
    </recommendedName>
    <alternativeName>
        <fullName evidence="1">Starch [bacterial glycogen] synthase</fullName>
    </alternativeName>
</protein>
<accession>Q7MJ50</accession>
<gene>
    <name evidence="1" type="primary">glgA</name>
    <name type="ordered locus">VV2312</name>
</gene>